<proteinExistence type="inferred from homology"/>
<name>RDRP_I01A1</name>
<keyword id="KW-1262">Eukaryotic host gene expression shutoff by virus</keyword>
<keyword id="KW-1191">Eukaryotic host transcription shutoff by virus</keyword>
<keyword id="KW-1035">Host cytoplasm</keyword>
<keyword id="KW-1190">Host gene expression shutoff by virus</keyword>
<keyword id="KW-1048">Host nucleus</keyword>
<keyword id="KW-0945">Host-virus interaction</keyword>
<keyword id="KW-1104">Inhibition of host RNA polymerase II by virus</keyword>
<keyword id="KW-0547">Nucleotide-binding</keyword>
<keyword id="KW-0548">Nucleotidyltransferase</keyword>
<keyword id="KW-0597">Phosphoprotein</keyword>
<keyword id="KW-0696">RNA-directed RNA polymerase</keyword>
<keyword id="KW-0808">Transferase</keyword>
<keyword id="KW-0693">Viral RNA replication</keyword>
<keyword id="KW-1195">Viral transcription</keyword>
<feature type="chain" id="PRO_0000311160" description="RNA-directed RNA polymerase catalytic subunit">
    <location>
        <begin position="1"/>
        <end position="647" status="greater than"/>
    </location>
</feature>
<feature type="domain" description="RdRp catalytic" evidence="3">
    <location>
        <begin position="286"/>
        <end position="483"/>
    </location>
</feature>
<feature type="region of interest" description="Disordered" evidence="4">
    <location>
        <begin position="50"/>
        <end position="82"/>
    </location>
</feature>
<feature type="region of interest" description="Promoter-binding site" evidence="1">
    <location>
        <begin position="249"/>
        <end position="256"/>
    </location>
</feature>
<feature type="short sequence motif" description="Nuclear localization signal" evidence="1">
    <location>
        <begin position="187"/>
        <end position="195"/>
    </location>
</feature>
<feature type="short sequence motif" description="Nuclear localization signal" evidence="1">
    <location>
        <begin position="203"/>
        <end position="216"/>
    </location>
</feature>
<feature type="compositionally biased region" description="Polar residues" evidence="4">
    <location>
        <begin position="55"/>
        <end position="64"/>
    </location>
</feature>
<feature type="non-terminal residue">
    <location>
        <position position="647"/>
    </location>
</feature>
<accession>Q809M7</accession>
<gene>
    <name type="primary">PB1</name>
</gene>
<evidence type="ECO:0000250" key="1"/>
<evidence type="ECO:0000250" key="2">
    <source>
        <dbReference type="UniProtKB" id="P03431"/>
    </source>
</evidence>
<evidence type="ECO:0000255" key="3">
    <source>
        <dbReference type="PROSITE-ProRule" id="PRU00539"/>
    </source>
</evidence>
<evidence type="ECO:0000256" key="4">
    <source>
        <dbReference type="SAM" id="MobiDB-lite"/>
    </source>
</evidence>
<evidence type="ECO:0000305" key="5"/>
<comment type="function">
    <text evidence="2">RNA-dependent RNA polymerase which is responsible for replication and transcription of virus RNA segments. The transcription of viral mRNAs occurs by a unique mechanism called cap-snatching. 5' methylated caps of cellular mRNAs are cleaved after 10-13 nucleotides by PA. In turn, these short capped RNAs are used as primers by PB1 for transcription of viral mRNAs. During virus replication, PB1 initiates RNA synthesis and copy vRNA into complementary RNA (cRNA) which in turn serves as a template for the production of more vRNAs.</text>
</comment>
<comment type="catalytic activity">
    <reaction evidence="3">
        <text>RNA(n) + a ribonucleoside 5'-triphosphate = RNA(n+1) + diphosphate</text>
        <dbReference type="Rhea" id="RHEA:21248"/>
        <dbReference type="Rhea" id="RHEA-COMP:14527"/>
        <dbReference type="Rhea" id="RHEA-COMP:17342"/>
        <dbReference type="ChEBI" id="CHEBI:33019"/>
        <dbReference type="ChEBI" id="CHEBI:61557"/>
        <dbReference type="ChEBI" id="CHEBI:140395"/>
        <dbReference type="EC" id="2.7.7.48"/>
    </reaction>
</comment>
<comment type="subunit">
    <text evidence="2">Influenza RNA polymerase is composed of three subunits: PB1, PB2 and PA. Interacts (via N-terminus) with PA (via C-terminus). Interacts (via C-terminus) with PB2 (via N-terminus); this interaction is essential for transcription initiation.</text>
</comment>
<comment type="subcellular location">
    <subcellularLocation>
        <location evidence="2">Host nucleus</location>
    </subcellularLocation>
    <subcellularLocation>
        <location evidence="2">Host cytoplasm</location>
    </subcellularLocation>
</comment>
<comment type="PTM">
    <text evidence="2">Phosphorylated by host PRKCA.</text>
</comment>
<comment type="similarity">
    <text evidence="5">Belongs to the influenza viruses polymerase PB1 family.</text>
</comment>
<dbReference type="EC" id="2.7.7.48"/>
<dbReference type="EMBL" id="AF509170">
    <property type="protein sequence ID" value="AAO53013.1"/>
    <property type="molecule type" value="Genomic_DNA"/>
</dbReference>
<dbReference type="SMR" id="Q809M7"/>
<dbReference type="GO" id="GO:0030430">
    <property type="term" value="C:host cell cytoplasm"/>
    <property type="evidence" value="ECO:0007669"/>
    <property type="project" value="UniProtKB-SubCell"/>
</dbReference>
<dbReference type="GO" id="GO:0042025">
    <property type="term" value="C:host cell nucleus"/>
    <property type="evidence" value="ECO:0007669"/>
    <property type="project" value="UniProtKB-SubCell"/>
</dbReference>
<dbReference type="GO" id="GO:0000166">
    <property type="term" value="F:nucleotide binding"/>
    <property type="evidence" value="ECO:0007669"/>
    <property type="project" value="UniProtKB-KW"/>
</dbReference>
<dbReference type="GO" id="GO:0003723">
    <property type="term" value="F:RNA binding"/>
    <property type="evidence" value="ECO:0007669"/>
    <property type="project" value="InterPro"/>
</dbReference>
<dbReference type="GO" id="GO:0003968">
    <property type="term" value="F:RNA-directed RNA polymerase activity"/>
    <property type="evidence" value="ECO:0007669"/>
    <property type="project" value="UniProtKB-KW"/>
</dbReference>
<dbReference type="GO" id="GO:0039657">
    <property type="term" value="P:symbiont-mediated suppression of host gene expression"/>
    <property type="evidence" value="ECO:0007669"/>
    <property type="project" value="UniProtKB-KW"/>
</dbReference>
<dbReference type="GO" id="GO:0039523">
    <property type="term" value="P:symbiont-mediated suppression of host mRNA transcription via inhibition of RNA polymerase II activity"/>
    <property type="evidence" value="ECO:0007669"/>
    <property type="project" value="UniProtKB-KW"/>
</dbReference>
<dbReference type="GO" id="GO:0039694">
    <property type="term" value="P:viral RNA genome replication"/>
    <property type="evidence" value="ECO:0007669"/>
    <property type="project" value="InterPro"/>
</dbReference>
<dbReference type="GO" id="GO:0019083">
    <property type="term" value="P:viral transcription"/>
    <property type="evidence" value="ECO:0007669"/>
    <property type="project" value="UniProtKB-KW"/>
</dbReference>
<dbReference type="InterPro" id="IPR007099">
    <property type="entry name" value="RNA-dir_pol_NSvirus"/>
</dbReference>
<dbReference type="InterPro" id="IPR001407">
    <property type="entry name" value="RNA_pol_PB1_influenza"/>
</dbReference>
<dbReference type="Pfam" id="PF00602">
    <property type="entry name" value="Flu_PB1"/>
    <property type="match status" value="1"/>
</dbReference>
<dbReference type="PROSITE" id="PS50525">
    <property type="entry name" value="RDRP_SSRNA_NEG_SEG"/>
    <property type="match status" value="1"/>
</dbReference>
<sequence length="647" mass="73665">MDVNPTLLFLKVPAQNAISTTFPYTGDPPYSHGTGTGYTMDTVNRTHQYSEKGKWTTNTETGAPQLNPIDGPLPEDNEPSGYAQTDCVLEAMAFLEESHSGIFENSCLETMEIVQQTRVDKLTQGRQTYDWTLNRNQPAATALANTIEIFRSNGLTANESGRLIDFLKDVMESMDKEEMEITTHFQRKRRVRDNMTKKMVTQRTIGKKKQRLNKKSYLIRALTLNTMTKDAERGKLKRRAIATPGMQIRGFVYFVETLARSICEKLEQSGLPVGGNEKKAKLANVVRKMMTNSQDTELSFTITGDNTKWNENQNPRVFLAMITYITRNQPEWFRNVLSIAPIMFSNKMARLGKGYMFESKSMKLRTQIPAEMLANIDLKYFNESTRKKIEKIRPLLIDGTASLSPGMMMGMFNMLSTVLGVSILNLGQKRYTKTTYWWDGLQSSDDFALIVNAPNHEGIQAGVDRFYRTCKLVGINMSKKKSYINRTGTFEFTSFFYRYGFVANFSMELPSFGVSGINESADMSIGVTVIKNNMINNDLGPATAQMALQLFIKDYRYTYRCHRGDTQIQTRRSFELKKLWEQTRSKAGLLVSDGGPNLYNIRNLHIPEVCLKWELMDEDYQGRLCNPLNPFVSHKEIESVNNAVVMP</sequence>
<organismHost>
    <name type="scientific">Aves</name>
    <dbReference type="NCBI Taxonomy" id="8782"/>
</organismHost>
<organismHost>
    <name type="scientific">Felis catus</name>
    <name type="common">Cat</name>
    <name type="synonym">Felis silvestris catus</name>
    <dbReference type="NCBI Taxonomy" id="9685"/>
</organismHost>
<organismHost>
    <name type="scientific">Homo sapiens</name>
    <name type="common">Human</name>
    <dbReference type="NCBI Taxonomy" id="9606"/>
</organismHost>
<organismHost>
    <name type="scientific">Panthera pardus</name>
    <name type="common">Leopard</name>
    <name type="synonym">Felis pardus</name>
    <dbReference type="NCBI Taxonomy" id="9691"/>
</organismHost>
<organismHost>
    <name type="scientific">Panthera tigris</name>
    <name type="common">Tiger</name>
    <dbReference type="NCBI Taxonomy" id="9694"/>
</organismHost>
<organismHost>
    <name type="scientific">Sus scrofa</name>
    <name type="common">Pig</name>
    <dbReference type="NCBI Taxonomy" id="9823"/>
</organismHost>
<reference key="1">
    <citation type="journal article" date="2002" name="Proc. Natl. Acad. Sci. U.S.A.">
        <title>Emergence of multiple genotypes of H5N1 avian influenza viruses in Hong Kong SAR.</title>
        <authorList>
            <person name="Guan Y."/>
            <person name="Peiris J.S.M."/>
            <person name="Lipatov A.S."/>
            <person name="Ellis T.M."/>
            <person name="Dyrting K.C."/>
            <person name="Krauss S."/>
            <person name="Zhang L.J."/>
            <person name="Webster R.G."/>
            <person name="Shortridge K.F."/>
        </authorList>
    </citation>
    <scope>NUCLEOTIDE SEQUENCE [GENOMIC RNA]</scope>
</reference>
<organism>
    <name type="scientific">Influenza A virus (strain A/Chicken/Hong Kong/YU562/2001 H5N1 genotype B)</name>
    <dbReference type="NCBI Taxonomy" id="196426"/>
    <lineage>
        <taxon>Viruses</taxon>
        <taxon>Riboviria</taxon>
        <taxon>Orthornavirae</taxon>
        <taxon>Negarnaviricota</taxon>
        <taxon>Polyploviricotina</taxon>
        <taxon>Insthoviricetes</taxon>
        <taxon>Articulavirales</taxon>
        <taxon>Orthomyxoviridae</taxon>
        <taxon>Alphainfluenzavirus</taxon>
        <taxon>Alphainfluenzavirus influenzae</taxon>
        <taxon>Influenza A virus</taxon>
    </lineage>
</organism>
<protein>
    <recommendedName>
        <fullName>RNA-directed RNA polymerase catalytic subunit</fullName>
        <ecNumber>2.7.7.48</ecNumber>
    </recommendedName>
    <alternativeName>
        <fullName>Polymerase basic protein 1</fullName>
        <shortName>PB1</shortName>
    </alternativeName>
    <alternativeName>
        <fullName>RNA-directed RNA polymerase subunit P1</fullName>
    </alternativeName>
</protein>